<organism>
    <name type="scientific">Salmonella paratyphi B (strain ATCC BAA-1250 / SPB7)</name>
    <dbReference type="NCBI Taxonomy" id="1016998"/>
    <lineage>
        <taxon>Bacteria</taxon>
        <taxon>Pseudomonadati</taxon>
        <taxon>Pseudomonadota</taxon>
        <taxon>Gammaproteobacteria</taxon>
        <taxon>Enterobacterales</taxon>
        <taxon>Enterobacteriaceae</taxon>
        <taxon>Salmonella</taxon>
    </lineage>
</organism>
<comment type="function">
    <text evidence="1">Catalyzes the 2-thiolation of uridine at the wobble position (U34) of tRNA(Lys), tRNA(Glu) and tRNA(Gln), leading to the formation of s(2)U34, the first step of tRNA-mnm(5)s(2)U34 synthesis. Sulfur is provided by IscS, via a sulfur-relay system. Binds ATP and its substrate tRNAs.</text>
</comment>
<comment type="catalytic activity">
    <reaction evidence="1">
        <text>S-sulfanyl-L-cysteinyl-[protein] + uridine(34) in tRNA + AH2 + ATP = 2-thiouridine(34) in tRNA + L-cysteinyl-[protein] + A + AMP + diphosphate + H(+)</text>
        <dbReference type="Rhea" id="RHEA:47032"/>
        <dbReference type="Rhea" id="RHEA-COMP:10131"/>
        <dbReference type="Rhea" id="RHEA-COMP:11726"/>
        <dbReference type="Rhea" id="RHEA-COMP:11727"/>
        <dbReference type="Rhea" id="RHEA-COMP:11728"/>
        <dbReference type="ChEBI" id="CHEBI:13193"/>
        <dbReference type="ChEBI" id="CHEBI:15378"/>
        <dbReference type="ChEBI" id="CHEBI:17499"/>
        <dbReference type="ChEBI" id="CHEBI:29950"/>
        <dbReference type="ChEBI" id="CHEBI:30616"/>
        <dbReference type="ChEBI" id="CHEBI:33019"/>
        <dbReference type="ChEBI" id="CHEBI:61963"/>
        <dbReference type="ChEBI" id="CHEBI:65315"/>
        <dbReference type="ChEBI" id="CHEBI:87170"/>
        <dbReference type="ChEBI" id="CHEBI:456215"/>
        <dbReference type="EC" id="2.8.1.13"/>
    </reaction>
</comment>
<comment type="subunit">
    <text evidence="1">Interacts with TusE.</text>
</comment>
<comment type="subcellular location">
    <subcellularLocation>
        <location evidence="1">Cytoplasm</location>
    </subcellularLocation>
</comment>
<comment type="similarity">
    <text evidence="1">Belongs to the MnmA/TRMU family.</text>
</comment>
<evidence type="ECO:0000255" key="1">
    <source>
        <dbReference type="HAMAP-Rule" id="MF_00144"/>
    </source>
</evidence>
<keyword id="KW-0067">ATP-binding</keyword>
<keyword id="KW-0963">Cytoplasm</keyword>
<keyword id="KW-1015">Disulfide bond</keyword>
<keyword id="KW-0547">Nucleotide-binding</keyword>
<keyword id="KW-0694">RNA-binding</keyword>
<keyword id="KW-0808">Transferase</keyword>
<keyword id="KW-0819">tRNA processing</keyword>
<keyword id="KW-0820">tRNA-binding</keyword>
<feature type="chain" id="PRO_0000349787" description="tRNA-specific 2-thiouridylase MnmA">
    <location>
        <begin position="1"/>
        <end position="368"/>
    </location>
</feature>
<feature type="region of interest" description="Interaction with target base in tRNA" evidence="1">
    <location>
        <begin position="97"/>
        <end position="99"/>
    </location>
</feature>
<feature type="region of interest" description="Interaction with tRNA" evidence="1">
    <location>
        <begin position="149"/>
        <end position="151"/>
    </location>
</feature>
<feature type="region of interest" description="Interaction with tRNA" evidence="1">
    <location>
        <begin position="311"/>
        <end position="312"/>
    </location>
</feature>
<feature type="active site" description="Nucleophile" evidence="1">
    <location>
        <position position="102"/>
    </location>
</feature>
<feature type="active site" description="Cysteine persulfide intermediate" evidence="1">
    <location>
        <position position="199"/>
    </location>
</feature>
<feature type="binding site" evidence="1">
    <location>
        <begin position="11"/>
        <end position="18"/>
    </location>
    <ligand>
        <name>ATP</name>
        <dbReference type="ChEBI" id="CHEBI:30616"/>
    </ligand>
</feature>
<feature type="binding site" evidence="1">
    <location>
        <position position="37"/>
    </location>
    <ligand>
        <name>ATP</name>
        <dbReference type="ChEBI" id="CHEBI:30616"/>
    </ligand>
</feature>
<feature type="binding site" evidence="1">
    <location>
        <position position="127"/>
    </location>
    <ligand>
        <name>ATP</name>
        <dbReference type="ChEBI" id="CHEBI:30616"/>
    </ligand>
</feature>
<feature type="site" description="Interaction with tRNA" evidence="1">
    <location>
        <position position="128"/>
    </location>
</feature>
<feature type="site" description="Interaction with tRNA" evidence="1">
    <location>
        <position position="344"/>
    </location>
</feature>
<feature type="disulfide bond" description="Alternate" evidence="1">
    <location>
        <begin position="102"/>
        <end position="199"/>
    </location>
</feature>
<dbReference type="EC" id="2.8.1.13" evidence="1"/>
<dbReference type="EMBL" id="CP000886">
    <property type="protein sequence ID" value="ABX67663.1"/>
    <property type="molecule type" value="Genomic_DNA"/>
</dbReference>
<dbReference type="RefSeq" id="WP_000004540.1">
    <property type="nucleotide sequence ID" value="NC_010102.1"/>
</dbReference>
<dbReference type="SMR" id="A9N4K8"/>
<dbReference type="KEGG" id="spq:SPAB_02280"/>
<dbReference type="PATRIC" id="fig|1016998.12.peg.2157"/>
<dbReference type="HOGENOM" id="CLU_035188_1_0_6"/>
<dbReference type="BioCyc" id="SENT1016998:SPAB_RS09275-MONOMER"/>
<dbReference type="Proteomes" id="UP000008556">
    <property type="component" value="Chromosome"/>
</dbReference>
<dbReference type="GO" id="GO:0005737">
    <property type="term" value="C:cytoplasm"/>
    <property type="evidence" value="ECO:0007669"/>
    <property type="project" value="UniProtKB-SubCell"/>
</dbReference>
<dbReference type="GO" id="GO:0005524">
    <property type="term" value="F:ATP binding"/>
    <property type="evidence" value="ECO:0007669"/>
    <property type="project" value="UniProtKB-KW"/>
</dbReference>
<dbReference type="GO" id="GO:0000049">
    <property type="term" value="F:tRNA binding"/>
    <property type="evidence" value="ECO:0007669"/>
    <property type="project" value="UniProtKB-KW"/>
</dbReference>
<dbReference type="GO" id="GO:0103016">
    <property type="term" value="F:tRNA-uridine 2-sulfurtransferase activity"/>
    <property type="evidence" value="ECO:0007669"/>
    <property type="project" value="UniProtKB-EC"/>
</dbReference>
<dbReference type="GO" id="GO:0002143">
    <property type="term" value="P:tRNA wobble position uridine thiolation"/>
    <property type="evidence" value="ECO:0007669"/>
    <property type="project" value="TreeGrafter"/>
</dbReference>
<dbReference type="CDD" id="cd01998">
    <property type="entry name" value="MnmA_TRMU-like"/>
    <property type="match status" value="1"/>
</dbReference>
<dbReference type="FunFam" id="2.30.30.280:FF:000001">
    <property type="entry name" value="tRNA-specific 2-thiouridylase MnmA"/>
    <property type="match status" value="1"/>
</dbReference>
<dbReference type="FunFam" id="2.40.30.10:FF:000023">
    <property type="entry name" value="tRNA-specific 2-thiouridylase MnmA"/>
    <property type="match status" value="1"/>
</dbReference>
<dbReference type="FunFam" id="3.40.50.620:FF:000004">
    <property type="entry name" value="tRNA-specific 2-thiouridylase MnmA"/>
    <property type="match status" value="1"/>
</dbReference>
<dbReference type="Gene3D" id="2.30.30.280">
    <property type="entry name" value="Adenine nucleotide alpha hydrolases-like domains"/>
    <property type="match status" value="1"/>
</dbReference>
<dbReference type="Gene3D" id="3.40.50.620">
    <property type="entry name" value="HUPs"/>
    <property type="match status" value="1"/>
</dbReference>
<dbReference type="Gene3D" id="2.40.30.10">
    <property type="entry name" value="Translation factors"/>
    <property type="match status" value="1"/>
</dbReference>
<dbReference type="HAMAP" id="MF_00144">
    <property type="entry name" value="tRNA_thiouridyl_MnmA"/>
    <property type="match status" value="1"/>
</dbReference>
<dbReference type="InterPro" id="IPR004506">
    <property type="entry name" value="MnmA-like"/>
</dbReference>
<dbReference type="InterPro" id="IPR046885">
    <property type="entry name" value="MnmA-like_C"/>
</dbReference>
<dbReference type="InterPro" id="IPR046884">
    <property type="entry name" value="MnmA-like_central"/>
</dbReference>
<dbReference type="InterPro" id="IPR023382">
    <property type="entry name" value="MnmA-like_central_sf"/>
</dbReference>
<dbReference type="InterPro" id="IPR014729">
    <property type="entry name" value="Rossmann-like_a/b/a_fold"/>
</dbReference>
<dbReference type="NCBIfam" id="NF001138">
    <property type="entry name" value="PRK00143.1"/>
    <property type="match status" value="1"/>
</dbReference>
<dbReference type="NCBIfam" id="TIGR00420">
    <property type="entry name" value="trmU"/>
    <property type="match status" value="1"/>
</dbReference>
<dbReference type="PANTHER" id="PTHR11933:SF5">
    <property type="entry name" value="MITOCHONDRIAL TRNA-SPECIFIC 2-THIOURIDYLASE 1"/>
    <property type="match status" value="1"/>
</dbReference>
<dbReference type="PANTHER" id="PTHR11933">
    <property type="entry name" value="TRNA 5-METHYLAMINOMETHYL-2-THIOURIDYLATE -METHYLTRANSFERASE"/>
    <property type="match status" value="1"/>
</dbReference>
<dbReference type="Pfam" id="PF03054">
    <property type="entry name" value="tRNA_Me_trans"/>
    <property type="match status" value="1"/>
</dbReference>
<dbReference type="Pfam" id="PF20258">
    <property type="entry name" value="tRNA_Me_trans_C"/>
    <property type="match status" value="1"/>
</dbReference>
<dbReference type="Pfam" id="PF20259">
    <property type="entry name" value="tRNA_Me_trans_M"/>
    <property type="match status" value="1"/>
</dbReference>
<dbReference type="SUPFAM" id="SSF52402">
    <property type="entry name" value="Adenine nucleotide alpha hydrolases-like"/>
    <property type="match status" value="1"/>
</dbReference>
<gene>
    <name evidence="1" type="primary">mnmA</name>
    <name type="ordered locus">SPAB_02280</name>
</gene>
<proteinExistence type="inferred from homology"/>
<name>MNMA_SALPB</name>
<protein>
    <recommendedName>
        <fullName evidence="1">tRNA-specific 2-thiouridylase MnmA</fullName>
        <ecNumber evidence="1">2.8.1.13</ecNumber>
    </recommendedName>
</protein>
<reference key="1">
    <citation type="submission" date="2007-11" db="EMBL/GenBank/DDBJ databases">
        <authorList>
            <consortium name="The Salmonella enterica serovar Paratyphi B Genome Sequencing Project"/>
            <person name="McClelland M."/>
            <person name="Sanderson E.K."/>
            <person name="Porwollik S."/>
            <person name="Spieth J."/>
            <person name="Clifton W.S."/>
            <person name="Fulton R."/>
            <person name="Cordes M."/>
            <person name="Wollam A."/>
            <person name="Shah N."/>
            <person name="Pepin K."/>
            <person name="Bhonagiri V."/>
            <person name="Nash W."/>
            <person name="Johnson M."/>
            <person name="Thiruvilangam P."/>
            <person name="Wilson R."/>
        </authorList>
    </citation>
    <scope>NUCLEOTIDE SEQUENCE [LARGE SCALE GENOMIC DNA]</scope>
    <source>
        <strain>ATCC BAA-1250 / SPB7</strain>
    </source>
</reference>
<accession>A9N4K8</accession>
<sequence length="368" mass="40871">MSESPKKVIVGMSGGVDSSVSAWLLQQQGYQVEGLFMKNWEEDDGEEYCTAAADLADAQAVCDKLGIELHTVNFAAEYWDNVFELFLEEYKAGRTPNPDILCNKEIKFKAFLEFAAEDLGADYIATGHYVRRADVNGKSRLLRGLDGNKDQSYFLYTLGHEQIAQSLFPVGELEKPQVRKIAEDLGLVTAKKKDSTGICFIGERKFRDFLGRYLPAQPGKIITVDGDEIGEHQGLMYHTLGQRKGLGIGGTKDGSEDPWYVVDKDVENNVLIVAQGHEHPRLMSVGLIAQQLHWVDREPFTGTLRCTVKTRYRQTDIPCTINALDDDRIEVIFDEPVAAVTPGQSAVFYSGEVCLGGGIIEQRLPLTV</sequence>